<organism>
    <name type="scientific">Saccharomyces cerevisiae (strain ATCC 204508 / S288c)</name>
    <name type="common">Baker's yeast</name>
    <dbReference type="NCBI Taxonomy" id="559292"/>
    <lineage>
        <taxon>Eukaryota</taxon>
        <taxon>Fungi</taxon>
        <taxon>Dikarya</taxon>
        <taxon>Ascomycota</taxon>
        <taxon>Saccharomycotina</taxon>
        <taxon>Saccharomycetes</taxon>
        <taxon>Saccharomycetales</taxon>
        <taxon>Saccharomycetaceae</taxon>
        <taxon>Saccharomyces</taxon>
    </lineage>
</organism>
<protein>
    <recommendedName>
        <fullName>DNA polymerase alpha subunit B</fullName>
    </recommendedName>
    <alternativeName>
        <fullName>DNA polymerase I subunit B</fullName>
    </alternativeName>
    <alternativeName>
        <fullName>DNA polymerase alpha:primase complex p86 subunit</fullName>
        <shortName>Pol alpha-primase complex p86 subunit</shortName>
    </alternativeName>
    <alternativeName>
        <fullName>DNA polymerase-primase complex p74 subunit</fullName>
    </alternativeName>
</protein>
<accession>P38121</accession>
<accession>D6VPW4</accession>
<proteinExistence type="evidence at protein level"/>
<sequence length="705" mass="78774">MSGSIDVITHFGPDADKPEIITALENLTKLHALSVEDLYIKWEQFSNQRRQTHTDLTSKNIDEFKQFLQLQMEKRANQISSSSKVNTSTKKPVIKKSLNSSPLFGLSIPKTPTLKKRKLHGPFSLSDSKQTYNVGSEAETNEKGNSSLKLEFTPGMAEDAVGDSAPLSHAKSSDAKTPGSSTFQTPTTNTPTTSRQNVPAGEILDSLNPENIEISSGNPNVGLLSTEEPSYNQVKVEPFYDAKKYKFRTMRQNLQEASDVLDDQIESFTKIIQNHYKLSPNDFADPTIQSQSEIYAVGRIVPDSPTYDKFLNPESLSLETSRMGGVGRRVRLDLSQVNELSFFLGQIVAFKGKNANGDYFTVNSILPLPYPNSPVSTSQELQEFQANLEGSSLKVIVTCGPYFANDNFSLELLQEFIDSINNEVKPHVLIMFGPFIDITHPLIASGKLPNFPQFKTQPKTLDELFLKLFTPILKTISPHIQTVLIPSTKDAISNHAAYPQASLIRKALQLPKRNFKCMANPSSFQINEIYFGCSNVDTFKDLKEVIKGGTTSSRYRLDRVSEHILQQRRYYPIFPGSIRTRIKPKDVSTKKETNDMESKEEKVYEHISGADLDVSYLGLTEFVGGFSPDIMIIPSELQHFARVVQNVVVINPGRFIRATGNRGSYAQITVQCPDLEDGKLTLVEGEEPVYLHNVWKRARVDLIAS</sequence>
<dbReference type="EMBL" id="Z35796">
    <property type="protein sequence ID" value="CAA84855.1"/>
    <property type="molecule type" value="Genomic_DNA"/>
</dbReference>
<dbReference type="EMBL" id="X74738">
    <property type="protein sequence ID" value="CAA52761.1"/>
    <property type="molecule type" value="Genomic_DNA"/>
</dbReference>
<dbReference type="EMBL" id="BK006936">
    <property type="protein sequence ID" value="DAA07084.1"/>
    <property type="molecule type" value="Genomic_DNA"/>
</dbReference>
<dbReference type="PIR" id="S45769">
    <property type="entry name" value="S45769"/>
</dbReference>
<dbReference type="RefSeq" id="NP_009518.1">
    <property type="nucleotide sequence ID" value="NM_001178275.1"/>
</dbReference>
<dbReference type="PDB" id="3FLO">
    <property type="method" value="X-ray"/>
    <property type="resolution" value="2.50 A"/>
    <property type="chains" value="A/C/E/G=246-705"/>
</dbReference>
<dbReference type="PDB" id="8B9A">
    <property type="method" value="EM"/>
    <property type="resolution" value="3.50 A"/>
    <property type="chains" value="B=1-705"/>
</dbReference>
<dbReference type="PDB" id="8B9B">
    <property type="method" value="EM"/>
    <property type="resolution" value="3.50 A"/>
    <property type="chains" value="B=1-705"/>
</dbReference>
<dbReference type="PDB" id="8B9C">
    <property type="method" value="EM"/>
    <property type="resolution" value="4.60 A"/>
    <property type="chains" value="B=1-705"/>
</dbReference>
<dbReference type="PDB" id="8FOC">
    <property type="method" value="EM"/>
    <property type="resolution" value="3.70 A"/>
    <property type="chains" value="C=1-705"/>
</dbReference>
<dbReference type="PDB" id="8FOD">
    <property type="method" value="EM"/>
    <property type="resolution" value="3.80 A"/>
    <property type="chains" value="C=1-705"/>
</dbReference>
<dbReference type="PDB" id="8FOE">
    <property type="method" value="EM"/>
    <property type="resolution" value="5.60 A"/>
    <property type="chains" value="C=1-705"/>
</dbReference>
<dbReference type="PDB" id="8FOH">
    <property type="method" value="EM"/>
    <property type="resolution" value="4.93 A"/>
    <property type="chains" value="C=1-705"/>
</dbReference>
<dbReference type="PDB" id="8FOJ">
    <property type="method" value="EM"/>
    <property type="resolution" value="4.80 A"/>
    <property type="chains" value="C=1-705"/>
</dbReference>
<dbReference type="PDB" id="8FOK">
    <property type="method" value="EM"/>
    <property type="resolution" value="3.56 A"/>
    <property type="chains" value="C=1-705"/>
</dbReference>
<dbReference type="PDBsum" id="3FLO"/>
<dbReference type="PDBsum" id="8B9A"/>
<dbReference type="PDBsum" id="8B9B"/>
<dbReference type="PDBsum" id="8B9C"/>
<dbReference type="PDBsum" id="8FOC"/>
<dbReference type="PDBsum" id="8FOD"/>
<dbReference type="PDBsum" id="8FOE"/>
<dbReference type="PDBsum" id="8FOH"/>
<dbReference type="PDBsum" id="8FOJ"/>
<dbReference type="PDBsum" id="8FOK"/>
<dbReference type="EMDB" id="EMD-15924"/>
<dbReference type="SMR" id="P38121"/>
<dbReference type="BioGRID" id="32662">
    <property type="interactions" value="423"/>
</dbReference>
<dbReference type="ComplexPortal" id="CPX-2091">
    <property type="entry name" value="DNA polymerase alpha:primase complex"/>
</dbReference>
<dbReference type="DIP" id="DIP-2536N"/>
<dbReference type="FunCoup" id="P38121">
    <property type="interactions" value="504"/>
</dbReference>
<dbReference type="IntAct" id="P38121">
    <property type="interactions" value="36"/>
</dbReference>
<dbReference type="MINT" id="P38121"/>
<dbReference type="STRING" id="4932.YBL035C"/>
<dbReference type="iPTMnet" id="P38121"/>
<dbReference type="PaxDb" id="4932-YBL035C"/>
<dbReference type="PeptideAtlas" id="P38121"/>
<dbReference type="EnsemblFungi" id="YBL035C_mRNA">
    <property type="protein sequence ID" value="YBL035C"/>
    <property type="gene ID" value="YBL035C"/>
</dbReference>
<dbReference type="GeneID" id="852245"/>
<dbReference type="KEGG" id="sce:YBL035C"/>
<dbReference type="AGR" id="SGD:S000000131"/>
<dbReference type="SGD" id="S000000131">
    <property type="gene designation" value="POL12"/>
</dbReference>
<dbReference type="VEuPathDB" id="FungiDB:YBL035C"/>
<dbReference type="eggNOG" id="KOG1625">
    <property type="taxonomic scope" value="Eukaryota"/>
</dbReference>
<dbReference type="GeneTree" id="ENSGT00390000016784"/>
<dbReference type="HOGENOM" id="CLU_014923_1_0_1"/>
<dbReference type="InParanoid" id="P38121"/>
<dbReference type="OMA" id="RFMYDRT"/>
<dbReference type="OrthoDB" id="336885at2759"/>
<dbReference type="BioCyc" id="YEAST:G3O-28937-MONOMER"/>
<dbReference type="Reactome" id="R-SCE-113501">
    <property type="pathway name" value="Inhibition of replication initiation of damaged DNA by RB1/E2F1"/>
</dbReference>
<dbReference type="Reactome" id="R-SCE-68952">
    <property type="pathway name" value="DNA replication initiation"/>
</dbReference>
<dbReference type="Reactome" id="R-SCE-68962">
    <property type="pathway name" value="Activation of the pre-replicative complex"/>
</dbReference>
<dbReference type="Reactome" id="R-SCE-69091">
    <property type="pathway name" value="Polymerase switching"/>
</dbReference>
<dbReference type="Reactome" id="R-SCE-69166">
    <property type="pathway name" value="Removal of the Flap Intermediate"/>
</dbReference>
<dbReference type="Reactome" id="R-SCE-69183">
    <property type="pathway name" value="Processive synthesis on the lagging strand"/>
</dbReference>
<dbReference type="BioGRID-ORCS" id="852245">
    <property type="hits" value="4 hits in 10 CRISPR screens"/>
</dbReference>
<dbReference type="EvolutionaryTrace" id="P38121"/>
<dbReference type="PRO" id="PR:P38121"/>
<dbReference type="Proteomes" id="UP000002311">
    <property type="component" value="Chromosome II"/>
</dbReference>
<dbReference type="RNAct" id="P38121">
    <property type="molecule type" value="protein"/>
</dbReference>
<dbReference type="GO" id="GO:0005658">
    <property type="term" value="C:alpha DNA polymerase:primase complex"/>
    <property type="evidence" value="ECO:0000314"/>
    <property type="project" value="SGD"/>
</dbReference>
<dbReference type="GO" id="GO:0005635">
    <property type="term" value="C:nuclear envelope"/>
    <property type="evidence" value="ECO:0000314"/>
    <property type="project" value="SGD"/>
</dbReference>
<dbReference type="GO" id="GO:0005634">
    <property type="term" value="C:nucleus"/>
    <property type="evidence" value="ECO:0000314"/>
    <property type="project" value="SGD"/>
</dbReference>
<dbReference type="GO" id="GO:0003677">
    <property type="term" value="F:DNA binding"/>
    <property type="evidence" value="ECO:0007669"/>
    <property type="project" value="InterPro"/>
</dbReference>
<dbReference type="GO" id="GO:0071897">
    <property type="term" value="P:DNA biosynthetic process"/>
    <property type="evidence" value="ECO:0007669"/>
    <property type="project" value="GOC"/>
</dbReference>
<dbReference type="GO" id="GO:0006270">
    <property type="term" value="P:DNA replication initiation"/>
    <property type="evidence" value="ECO:0000315"/>
    <property type="project" value="SGD"/>
</dbReference>
<dbReference type="GO" id="GO:0016233">
    <property type="term" value="P:telomere capping"/>
    <property type="evidence" value="ECO:0000315"/>
    <property type="project" value="SGD"/>
</dbReference>
<dbReference type="FunFam" id="3.60.21.60:FF:000011">
    <property type="entry name" value="DNA polymerase alpha subunit B"/>
    <property type="match status" value="1"/>
</dbReference>
<dbReference type="Gene3D" id="3.60.21.60">
    <property type="match status" value="1"/>
</dbReference>
<dbReference type="InterPro" id="IPR007185">
    <property type="entry name" value="DNA_pol_a/d/e_bsu"/>
</dbReference>
<dbReference type="InterPro" id="IPR016722">
    <property type="entry name" value="DNA_pol_alpha_bsu"/>
</dbReference>
<dbReference type="InterPro" id="IPR054300">
    <property type="entry name" value="DPOA2_OB"/>
</dbReference>
<dbReference type="PANTHER" id="PTHR23061">
    <property type="entry name" value="DNA POLYMERASE 2 ALPHA 70 KDA SUBUNIT"/>
    <property type="match status" value="1"/>
</dbReference>
<dbReference type="PANTHER" id="PTHR23061:SF12">
    <property type="entry name" value="DNA POLYMERASE ALPHA SUBUNIT B"/>
    <property type="match status" value="1"/>
</dbReference>
<dbReference type="Pfam" id="PF04042">
    <property type="entry name" value="DNA_pol_E_B"/>
    <property type="match status" value="1"/>
</dbReference>
<dbReference type="Pfam" id="PF22062">
    <property type="entry name" value="DPOA2_OB"/>
    <property type="match status" value="1"/>
</dbReference>
<dbReference type="PIRSF" id="PIRSF018300">
    <property type="entry name" value="DNA_pol_alph_2"/>
    <property type="match status" value="1"/>
</dbReference>
<reference key="1">
    <citation type="journal article" date="1994" name="Yeast">
        <title>The sequence of an 8.8 kb segment on the left arm of chromosome II from Saccharomyces cerevisiae reveals four new open reading frames including homologs of animal DNA polymerase alpha-primases and bacterial GTP cyclohydrolase II.</title>
        <authorList>
            <person name="Skala J."/>
            <person name="van Dyck L."/>
            <person name="Purnelle B."/>
            <person name="Goffeau A."/>
        </authorList>
    </citation>
    <scope>NUCLEOTIDE SEQUENCE [GENOMIC DNA]</scope>
    <source>
        <strain>ATCC 204508 / S288c</strain>
    </source>
</reference>
<reference key="2">
    <citation type="journal article" date="1994" name="EMBO J.">
        <title>Complete DNA sequence of yeast chromosome II.</title>
        <authorList>
            <person name="Feldmann H."/>
            <person name="Aigle M."/>
            <person name="Aljinovic G."/>
            <person name="Andre B."/>
            <person name="Baclet M.C."/>
            <person name="Barthe C."/>
            <person name="Baur A."/>
            <person name="Becam A.-M."/>
            <person name="Biteau N."/>
            <person name="Boles E."/>
            <person name="Brandt T."/>
            <person name="Brendel M."/>
            <person name="Brueckner M."/>
            <person name="Bussereau F."/>
            <person name="Christiansen C."/>
            <person name="Contreras R."/>
            <person name="Crouzet M."/>
            <person name="Cziepluch C."/>
            <person name="Demolis N."/>
            <person name="Delaveau T."/>
            <person name="Doignon F."/>
            <person name="Domdey H."/>
            <person name="Duesterhus S."/>
            <person name="Dubois E."/>
            <person name="Dujon B."/>
            <person name="El Bakkoury M."/>
            <person name="Entian K.-D."/>
            <person name="Feuermann M."/>
            <person name="Fiers W."/>
            <person name="Fobo G.M."/>
            <person name="Fritz C."/>
            <person name="Gassenhuber J."/>
            <person name="Glansdorff N."/>
            <person name="Goffeau A."/>
            <person name="Grivell L.A."/>
            <person name="de Haan M."/>
            <person name="Hein C."/>
            <person name="Herbert C.J."/>
            <person name="Hollenberg C.P."/>
            <person name="Holmstroem K."/>
            <person name="Jacq C."/>
            <person name="Jacquet M."/>
            <person name="Jauniaux J.-C."/>
            <person name="Jonniaux J.-L."/>
            <person name="Kallesoee T."/>
            <person name="Kiesau P."/>
            <person name="Kirchrath L."/>
            <person name="Koetter P."/>
            <person name="Korol S."/>
            <person name="Liebl S."/>
            <person name="Logghe M."/>
            <person name="Lohan A.J.E."/>
            <person name="Louis E.J."/>
            <person name="Li Z.Y."/>
            <person name="Maat M.J."/>
            <person name="Mallet L."/>
            <person name="Mannhaupt G."/>
            <person name="Messenguy F."/>
            <person name="Miosga T."/>
            <person name="Molemans F."/>
            <person name="Mueller S."/>
            <person name="Nasr F."/>
            <person name="Obermaier B."/>
            <person name="Perea J."/>
            <person name="Pierard A."/>
            <person name="Piravandi E."/>
            <person name="Pohl F.M."/>
            <person name="Pohl T.M."/>
            <person name="Potier S."/>
            <person name="Proft M."/>
            <person name="Purnelle B."/>
            <person name="Ramezani Rad M."/>
            <person name="Rieger M."/>
            <person name="Rose M."/>
            <person name="Schaaff-Gerstenschlaeger I."/>
            <person name="Scherens B."/>
            <person name="Schwarzlose C."/>
            <person name="Skala J."/>
            <person name="Slonimski P.P."/>
            <person name="Smits P.H.M."/>
            <person name="Souciet J.-L."/>
            <person name="Steensma H.Y."/>
            <person name="Stucka R."/>
            <person name="Urrestarazu L.A."/>
            <person name="van der Aart Q.J.M."/>
            <person name="Van Dyck L."/>
            <person name="Vassarotti A."/>
            <person name="Vetter I."/>
            <person name="Vierendeels F."/>
            <person name="Vissers S."/>
            <person name="Wagner G."/>
            <person name="de Wergifosse P."/>
            <person name="Wolfe K.H."/>
            <person name="Zagulski M."/>
            <person name="Zimmermann F.K."/>
            <person name="Mewes H.-W."/>
            <person name="Kleine K."/>
        </authorList>
    </citation>
    <scope>NUCLEOTIDE SEQUENCE [LARGE SCALE GENOMIC DNA]</scope>
    <source>
        <strain>ATCC 204508 / S288c</strain>
    </source>
</reference>
<reference key="3">
    <citation type="journal article" date="2014" name="G3 (Bethesda)">
        <title>The reference genome sequence of Saccharomyces cerevisiae: Then and now.</title>
        <authorList>
            <person name="Engel S.R."/>
            <person name="Dietrich F.S."/>
            <person name="Fisk D.G."/>
            <person name="Binkley G."/>
            <person name="Balakrishnan R."/>
            <person name="Costanzo M.C."/>
            <person name="Dwight S.S."/>
            <person name="Hitz B.C."/>
            <person name="Karra K."/>
            <person name="Nash R.S."/>
            <person name="Weng S."/>
            <person name="Wong E.D."/>
            <person name="Lloyd P."/>
            <person name="Skrzypek M.S."/>
            <person name="Miyasato S.R."/>
            <person name="Simison M."/>
            <person name="Cherry J.M."/>
        </authorList>
    </citation>
    <scope>GENOME REANNOTATION</scope>
    <source>
        <strain>ATCC 204508 / S288c</strain>
    </source>
</reference>
<reference key="4">
    <citation type="journal article" date="1988" name="Biochim. Biophys. Acta">
        <title>The yeast DNA polymerase-primase complex: genes and proteins.</title>
        <authorList>
            <person name="Plevani P."/>
            <person name="Foiani M."/>
            <person name="Muzi Falconi M."/>
            <person name="Pizzagalli A."/>
            <person name="Santocanale C."/>
            <person name="Francesconi S."/>
            <person name="Valsasnini P."/>
            <person name="Comedini A."/>
            <person name="Piatti S."/>
            <person name="Lucchini G."/>
        </authorList>
    </citation>
    <scope>COMPOSITION OF THE DNA POLYMERASE ALPHA:PRIMASE COMPLEX</scope>
</reference>
<reference key="5">
    <citation type="journal article" date="1996" name="J. Biol. Chem.">
        <title>Phosphorylation of the DNA polymerase alpha-primase B subunit is dependent on its association with the p180 polypeptide.</title>
        <authorList>
            <person name="Ferrari M."/>
            <person name="Lucchini G."/>
            <person name="Plevani P."/>
            <person name="Foiani M."/>
        </authorList>
    </citation>
    <scope>PHOSPHORYLATION</scope>
    <scope>IDENTIFICATION IN THE DNA POLYMERASE ALPHA:PRIMASE COMPLEX</scope>
</reference>
<reference key="6">
    <citation type="journal article" date="2003" name="Nature">
        <title>Global analysis of protein expression in yeast.</title>
        <authorList>
            <person name="Ghaemmaghami S."/>
            <person name="Huh W.-K."/>
            <person name="Bower K."/>
            <person name="Howson R.W."/>
            <person name="Belle A."/>
            <person name="Dephoure N."/>
            <person name="O'Shea E.K."/>
            <person name="Weissman J.S."/>
        </authorList>
    </citation>
    <scope>LEVEL OF PROTEIN EXPRESSION [LARGE SCALE ANALYSIS]</scope>
</reference>
<reference key="7">
    <citation type="journal article" date="2006" name="J. Biol. Chem.">
        <title>A conserved Hsp10-like domain in Mcm10 is required to stabilize the catalytic subunit of DNA polymerase-alpha in budding yeast.</title>
        <authorList>
            <person name="Ricke R.M."/>
            <person name="Bielinsky A.-K."/>
        </authorList>
    </citation>
    <scope>INTERACTION WITH MCM10</scope>
</reference>
<reference key="8">
    <citation type="journal article" date="2008" name="Mol. Cell. Proteomics">
        <title>A multidimensional chromatography technology for in-depth phosphoproteome analysis.</title>
        <authorList>
            <person name="Albuquerque C.P."/>
            <person name="Smolka M.B."/>
            <person name="Payne S.H."/>
            <person name="Bafna V."/>
            <person name="Eng J."/>
            <person name="Zhou H."/>
        </authorList>
    </citation>
    <scope>IDENTIFICATION BY MASS SPECTROMETRY [LARGE SCALE ANALYSIS]</scope>
</reference>
<reference key="9">
    <citation type="journal article" date="2009" name="Science">
        <title>Global analysis of Cdk1 substrate phosphorylation sites provides insights into evolution.</title>
        <authorList>
            <person name="Holt L.J."/>
            <person name="Tuch B.B."/>
            <person name="Villen J."/>
            <person name="Johnson A.D."/>
            <person name="Gygi S.P."/>
            <person name="Morgan D.O."/>
        </authorList>
    </citation>
    <scope>PHOSPHORYLATION [LARGE SCALE ANALYSIS] AT SER-126</scope>
    <scope>IDENTIFICATION BY MASS SPECTROMETRY [LARGE SCALE ANALYSIS]</scope>
</reference>
<reference evidence="8" key="10">
    <citation type="journal article" date="2009" name="EMBO J.">
        <title>3D architecture of DNA Pol alpha reveals the functional core of multi-subunit replicative polymerases.</title>
        <authorList>
            <person name="Klinge S."/>
            <person name="Nunez-Ramirez R."/>
            <person name="Llorca O."/>
            <person name="Pellegrini L."/>
        </authorList>
    </citation>
    <scope>X-RAY CRYSTALLOGRAPHY (2.50 ANGSTROMS) OF 246-705 IN COMPLEX WITH POL1</scope>
</reference>
<keyword id="KW-0002">3D-structure</keyword>
<keyword id="KW-0235">DNA replication</keyword>
<keyword id="KW-0539">Nucleus</keyword>
<keyword id="KW-0597">Phosphoprotein</keyword>
<keyword id="KW-1185">Reference proteome</keyword>
<feature type="chain" id="PRO_0000194041" description="DNA polymerase alpha subunit B">
    <location>
        <begin position="1"/>
        <end position="705"/>
    </location>
</feature>
<feature type="region of interest" description="Disordered" evidence="2">
    <location>
        <begin position="115"/>
        <end position="199"/>
    </location>
</feature>
<feature type="compositionally biased region" description="Polar residues" evidence="2">
    <location>
        <begin position="125"/>
        <end position="134"/>
    </location>
</feature>
<feature type="compositionally biased region" description="Low complexity" evidence="2">
    <location>
        <begin position="181"/>
        <end position="197"/>
    </location>
</feature>
<feature type="modified residue" description="Phosphoserine" evidence="9">
    <location>
        <position position="126"/>
    </location>
</feature>
<feature type="helix" evidence="10">
    <location>
        <begin position="254"/>
        <end position="276"/>
    </location>
</feature>
<feature type="helix" evidence="10">
    <location>
        <begin position="280"/>
        <end position="282"/>
    </location>
</feature>
<feature type="strand" evidence="10">
    <location>
        <begin position="294"/>
        <end position="306"/>
    </location>
</feature>
<feature type="strand" evidence="10">
    <location>
        <begin position="315"/>
        <end position="319"/>
    </location>
</feature>
<feature type="helix" evidence="10">
    <location>
        <begin position="322"/>
        <end position="325"/>
    </location>
</feature>
<feature type="strand" evidence="10">
    <location>
        <begin position="329"/>
        <end position="333"/>
    </location>
</feature>
<feature type="strand" evidence="10">
    <location>
        <begin position="340"/>
        <end position="342"/>
    </location>
</feature>
<feature type="strand" evidence="10">
    <location>
        <begin position="347"/>
        <end position="353"/>
    </location>
</feature>
<feature type="strand" evidence="10">
    <location>
        <begin position="355"/>
        <end position="358"/>
    </location>
</feature>
<feature type="strand" evidence="10">
    <location>
        <begin position="360"/>
        <end position="365"/>
    </location>
</feature>
<feature type="strand" evidence="10">
    <location>
        <begin position="375"/>
        <end position="377"/>
    </location>
</feature>
<feature type="helix" evidence="10">
    <location>
        <begin position="378"/>
        <end position="388"/>
    </location>
</feature>
<feature type="strand" evidence="10">
    <location>
        <begin position="393"/>
        <end position="400"/>
    </location>
</feature>
<feature type="helix" evidence="10">
    <location>
        <begin position="411"/>
        <end position="422"/>
    </location>
</feature>
<feature type="strand" evidence="10">
    <location>
        <begin position="427"/>
        <end position="433"/>
    </location>
</feature>
<feature type="strand" evidence="10">
    <location>
        <begin position="435"/>
        <end position="437"/>
    </location>
</feature>
<feature type="helix" evidence="10">
    <location>
        <begin position="441"/>
        <end position="445"/>
    </location>
</feature>
<feature type="helix" evidence="10">
    <location>
        <begin position="461"/>
        <end position="468"/>
    </location>
</feature>
<feature type="helix" evidence="10">
    <location>
        <begin position="470"/>
        <end position="473"/>
    </location>
</feature>
<feature type="strand" evidence="10">
    <location>
        <begin position="480"/>
        <end position="485"/>
    </location>
</feature>
<feature type="strand" evidence="10">
    <location>
        <begin position="497"/>
        <end position="500"/>
    </location>
</feature>
<feature type="turn" evidence="10">
    <location>
        <begin position="505"/>
        <end position="509"/>
    </location>
</feature>
<feature type="turn" evidence="10">
    <location>
        <begin position="512"/>
        <end position="514"/>
    </location>
</feature>
<feature type="strand" evidence="10">
    <location>
        <begin position="515"/>
        <end position="517"/>
    </location>
</feature>
<feature type="strand" evidence="10">
    <location>
        <begin position="520"/>
        <end position="526"/>
    </location>
</feature>
<feature type="strand" evidence="10">
    <location>
        <begin position="529"/>
        <end position="533"/>
    </location>
</feature>
<feature type="helix" evidence="10">
    <location>
        <begin position="538"/>
        <end position="541"/>
    </location>
</feature>
<feature type="strand" evidence="10">
    <location>
        <begin position="545"/>
        <end position="547"/>
    </location>
</feature>
<feature type="helix" evidence="10">
    <location>
        <begin position="549"/>
        <end position="553"/>
    </location>
</feature>
<feature type="helix" evidence="10">
    <location>
        <begin position="556"/>
        <end position="567"/>
    </location>
</feature>
<feature type="helix" evidence="10">
    <location>
        <begin position="614"/>
        <end position="620"/>
    </location>
</feature>
<feature type="helix" evidence="10">
    <location>
        <begin position="623"/>
        <end position="625"/>
    </location>
</feature>
<feature type="strand" evidence="10">
    <location>
        <begin position="629"/>
        <end position="632"/>
    </location>
</feature>
<feature type="strand" evidence="10">
    <location>
        <begin position="640"/>
        <end position="644"/>
    </location>
</feature>
<feature type="strand" evidence="10">
    <location>
        <begin position="647"/>
        <end position="651"/>
    </location>
</feature>
<feature type="strand" evidence="10">
    <location>
        <begin position="664"/>
        <end position="670"/>
    </location>
</feature>
<feature type="strand" evidence="10">
    <location>
        <begin position="675"/>
        <end position="678"/>
    </location>
</feature>
<feature type="strand" evidence="10">
    <location>
        <begin position="680"/>
        <end position="683"/>
    </location>
</feature>
<feature type="strand" evidence="10">
    <location>
        <begin position="685"/>
        <end position="687"/>
    </location>
</feature>
<feature type="strand" evidence="10">
    <location>
        <begin position="689"/>
        <end position="691"/>
    </location>
</feature>
<feature type="helix" evidence="10">
    <location>
        <begin position="694"/>
        <end position="697"/>
    </location>
</feature>
<feature type="strand" evidence="10">
    <location>
        <begin position="698"/>
        <end position="704"/>
    </location>
</feature>
<evidence type="ECO:0000250" key="1"/>
<evidence type="ECO:0000256" key="2">
    <source>
        <dbReference type="SAM" id="MobiDB-lite"/>
    </source>
</evidence>
<evidence type="ECO:0000269" key="3">
    <source>
    </source>
</evidence>
<evidence type="ECO:0000269" key="4">
    <source>
    </source>
</evidence>
<evidence type="ECO:0000269" key="5">
    <source>
    </source>
</evidence>
<evidence type="ECO:0000269" key="6">
    <source>
    </source>
</evidence>
<evidence type="ECO:0000305" key="7"/>
<evidence type="ECO:0007744" key="8">
    <source>
        <dbReference type="PDB" id="3FLO"/>
    </source>
</evidence>
<evidence type="ECO:0007744" key="9">
    <source>
    </source>
</evidence>
<evidence type="ECO:0007829" key="10">
    <source>
        <dbReference type="PDB" id="3FLO"/>
    </source>
</evidence>
<gene>
    <name type="primary">POL12</name>
    <name type="ordered locus">YBL035C</name>
    <name type="ORF">YBL0414</name>
</gene>
<comment type="function">
    <text evidence="1">Non-catalytic component of DNA polymerase alpha, which in a complex with DNA primase (DNA polymerase alpha:primase) constitutes a replicative polymerase. POL12 may play an essential role at the early stage of chromosomal DNA replication by coupling DNA polymerase alpha to the cellular replication machinery (By similarity). Interacts with MCM10.</text>
</comment>
<comment type="subunit">
    <text evidence="4 5">DNA polymerase alpha:primase is a four subunit enzyme complex, which is assembled throughout the cell cycle, and consists of the two DNA polymerase subunits A POL1 and B POL12, and the DNA primase large PRI2 and small PRI1 subunits (PubMed:3061469). Subunit B POL12 binds to subunit A POL1 (PubMed:19494830).</text>
</comment>
<comment type="interaction">
    <interactant intactId="EBI-6111">
        <id>P38121</id>
    </interactant>
    <interactant intactId="EBI-6128">
        <id>P13382</id>
        <label>POL1</label>
    </interactant>
    <organismsDiffer>false</organismsDiffer>
    <experiments>5</experiments>
</comment>
<comment type="interaction">
    <interactant intactId="EBI-6111">
        <id>P38121</id>
    </interactant>
    <interactant intactId="EBI-18427">
        <id>P38960</id>
        <label>STN1</label>
    </interactant>
    <organismsDiffer>false</organismsDiffer>
    <experiments>2</experiments>
</comment>
<comment type="subcellular location">
    <subcellularLocation>
        <location>Nucleus</location>
    </subcellularLocation>
</comment>
<comment type="PTM">
    <text evidence="6">Phosphorylated in a cell cycle-dependent manner.</text>
</comment>
<comment type="miscellaneous">
    <text evidence="3">Present with 11200 molecules/cell in log phase SD medium.</text>
</comment>
<comment type="similarity">
    <text evidence="7">Belongs to the DNA polymerase alpha subunit B family.</text>
</comment>
<name>DPOA2_YEAST</name>